<accession>Q04600</accession>
<accession>D6VSA2</accession>
<comment type="subunit">
    <text evidence="6">Interacts with the 40S ribosomal subunit.</text>
</comment>
<comment type="domain">
    <text evidence="4">The PUA and the SUI1 domains may be involved in RNA binding.</text>
</comment>
<comment type="miscellaneous">
    <text evidence="5">Present with 3870 molecules/cell in log phase SD medium.</text>
</comment>
<comment type="similarity">
    <text evidence="7">Belongs to the eIF2D family.</text>
</comment>
<reference key="1">
    <citation type="journal article" date="1997" name="Nature">
        <title>The nucleotide sequence of Saccharomyces cerevisiae chromosome IV.</title>
        <authorList>
            <person name="Jacq C."/>
            <person name="Alt-Moerbe J."/>
            <person name="Andre B."/>
            <person name="Arnold W."/>
            <person name="Bahr A."/>
            <person name="Ballesta J.P.G."/>
            <person name="Bargues M."/>
            <person name="Baron L."/>
            <person name="Becker A."/>
            <person name="Biteau N."/>
            <person name="Bloecker H."/>
            <person name="Blugeon C."/>
            <person name="Boskovic J."/>
            <person name="Brandt P."/>
            <person name="Brueckner M."/>
            <person name="Buitrago M.J."/>
            <person name="Coster F."/>
            <person name="Delaveau T."/>
            <person name="del Rey F."/>
            <person name="Dujon B."/>
            <person name="Eide L.G."/>
            <person name="Garcia-Cantalejo J.M."/>
            <person name="Goffeau A."/>
            <person name="Gomez-Peris A."/>
            <person name="Granotier C."/>
            <person name="Hanemann V."/>
            <person name="Hankeln T."/>
            <person name="Hoheisel J.D."/>
            <person name="Jaeger W."/>
            <person name="Jimenez A."/>
            <person name="Jonniaux J.-L."/>
            <person name="Kraemer C."/>
            <person name="Kuester H."/>
            <person name="Laamanen P."/>
            <person name="Legros Y."/>
            <person name="Louis E.J."/>
            <person name="Moeller-Rieker S."/>
            <person name="Monnet A."/>
            <person name="Moro M."/>
            <person name="Mueller-Auer S."/>
            <person name="Nussbaumer B."/>
            <person name="Paricio N."/>
            <person name="Paulin L."/>
            <person name="Perea J."/>
            <person name="Perez-Alonso M."/>
            <person name="Perez-Ortin J.E."/>
            <person name="Pohl T.M."/>
            <person name="Prydz H."/>
            <person name="Purnelle B."/>
            <person name="Rasmussen S.W."/>
            <person name="Remacha M.A."/>
            <person name="Revuelta J.L."/>
            <person name="Rieger M."/>
            <person name="Salom D."/>
            <person name="Saluz H.P."/>
            <person name="Saiz J.E."/>
            <person name="Saren A.-M."/>
            <person name="Schaefer M."/>
            <person name="Scharfe M."/>
            <person name="Schmidt E.R."/>
            <person name="Schneider C."/>
            <person name="Scholler P."/>
            <person name="Schwarz S."/>
            <person name="Soler-Mira A."/>
            <person name="Urrestarazu L.A."/>
            <person name="Verhasselt P."/>
            <person name="Vissers S."/>
            <person name="Voet M."/>
            <person name="Volckaert G."/>
            <person name="Wagner G."/>
            <person name="Wambutt R."/>
            <person name="Wedler E."/>
            <person name="Wedler H."/>
            <person name="Woelfl S."/>
            <person name="Harris D.E."/>
            <person name="Bowman S."/>
            <person name="Brown D."/>
            <person name="Churcher C.M."/>
            <person name="Connor R."/>
            <person name="Dedman K."/>
            <person name="Gentles S."/>
            <person name="Hamlin N."/>
            <person name="Hunt S."/>
            <person name="Jones L."/>
            <person name="McDonald S."/>
            <person name="Murphy L.D."/>
            <person name="Niblett D."/>
            <person name="Odell C."/>
            <person name="Oliver K."/>
            <person name="Rajandream M.A."/>
            <person name="Richards C."/>
            <person name="Shore L."/>
            <person name="Walsh S.V."/>
            <person name="Barrell B.G."/>
            <person name="Dietrich F.S."/>
            <person name="Mulligan J.T."/>
            <person name="Allen E."/>
            <person name="Araujo R."/>
            <person name="Aviles E."/>
            <person name="Berno A."/>
            <person name="Carpenter J."/>
            <person name="Chen E."/>
            <person name="Cherry J.M."/>
            <person name="Chung E."/>
            <person name="Duncan M."/>
            <person name="Hunicke-Smith S."/>
            <person name="Hyman R.W."/>
            <person name="Komp C."/>
            <person name="Lashkari D."/>
            <person name="Lew H."/>
            <person name="Lin D."/>
            <person name="Mosedale D."/>
            <person name="Nakahara K."/>
            <person name="Namath A."/>
            <person name="Oefner P."/>
            <person name="Oh C."/>
            <person name="Petel F.X."/>
            <person name="Roberts D."/>
            <person name="Schramm S."/>
            <person name="Schroeder M."/>
            <person name="Shogren T."/>
            <person name="Shroff N."/>
            <person name="Winant A."/>
            <person name="Yelton M.A."/>
            <person name="Botstein D."/>
            <person name="Davis R.W."/>
            <person name="Johnston M."/>
            <person name="Andrews S."/>
            <person name="Brinkman R."/>
            <person name="Cooper J."/>
            <person name="Ding H."/>
            <person name="Du Z."/>
            <person name="Favello A."/>
            <person name="Fulton L."/>
            <person name="Gattung S."/>
            <person name="Greco T."/>
            <person name="Hallsworth K."/>
            <person name="Hawkins J."/>
            <person name="Hillier L.W."/>
            <person name="Jier M."/>
            <person name="Johnson D."/>
            <person name="Johnston L."/>
            <person name="Kirsten J."/>
            <person name="Kucaba T."/>
            <person name="Langston Y."/>
            <person name="Latreille P."/>
            <person name="Le T."/>
            <person name="Mardis E."/>
            <person name="Menezes S."/>
            <person name="Miller N."/>
            <person name="Nhan M."/>
            <person name="Pauley A."/>
            <person name="Peluso D."/>
            <person name="Rifkin L."/>
            <person name="Riles L."/>
            <person name="Taich A."/>
            <person name="Trevaskis E."/>
            <person name="Vignati D."/>
            <person name="Wilcox L."/>
            <person name="Wohldman P."/>
            <person name="Vaudin M."/>
            <person name="Wilson R."/>
            <person name="Waterston R."/>
            <person name="Albermann K."/>
            <person name="Hani J."/>
            <person name="Heumann K."/>
            <person name="Kleine K."/>
            <person name="Mewes H.-W."/>
            <person name="Zollner A."/>
            <person name="Zaccaria P."/>
        </authorList>
    </citation>
    <scope>NUCLEOTIDE SEQUENCE [LARGE SCALE GENOMIC DNA]</scope>
    <source>
        <strain>ATCC 204508 / S288c</strain>
    </source>
</reference>
<reference key="2">
    <citation type="journal article" date="2014" name="G3 (Bethesda)">
        <title>The reference genome sequence of Saccharomyces cerevisiae: Then and now.</title>
        <authorList>
            <person name="Engel S.R."/>
            <person name="Dietrich F.S."/>
            <person name="Fisk D.G."/>
            <person name="Binkley G."/>
            <person name="Balakrishnan R."/>
            <person name="Costanzo M.C."/>
            <person name="Dwight S.S."/>
            <person name="Hitz B.C."/>
            <person name="Karra K."/>
            <person name="Nash R.S."/>
            <person name="Weng S."/>
            <person name="Wong E.D."/>
            <person name="Lloyd P."/>
            <person name="Skrzypek M.S."/>
            <person name="Miyasato S.R."/>
            <person name="Simison M."/>
            <person name="Cherry J.M."/>
        </authorList>
    </citation>
    <scope>GENOME REANNOTATION</scope>
    <source>
        <strain>ATCC 204508 / S288c</strain>
    </source>
</reference>
<reference key="3">
    <citation type="journal article" date="1999" name="J. Mol. Evol.">
        <title>Novel predicted RNA-binding domains associated with the translation machinery.</title>
        <authorList>
            <person name="Aravind L."/>
            <person name="Koonin E.V."/>
        </authorList>
    </citation>
    <scope>DOMAINS</scope>
</reference>
<reference key="4">
    <citation type="journal article" date="2003" name="Nature">
        <title>Global analysis of protein expression in yeast.</title>
        <authorList>
            <person name="Ghaemmaghami S."/>
            <person name="Huh W.-K."/>
            <person name="Bower K."/>
            <person name="Howson R.W."/>
            <person name="Belle A."/>
            <person name="Dephoure N."/>
            <person name="O'Shea E.K."/>
            <person name="Weissman J.S."/>
        </authorList>
    </citation>
    <scope>LEVEL OF PROTEIN EXPRESSION [LARGE SCALE ANALYSIS]</scope>
</reference>
<reference key="5">
    <citation type="journal article" date="2006" name="Genes Dev.">
        <title>Systematic identification and functional screens of uncharacterized proteins associated with eukaryotic ribosomal complexes.</title>
        <authorList>
            <person name="Fleischer T.C."/>
            <person name="Weaver C.M."/>
            <person name="McAfee K.J."/>
            <person name="Jennings J.L."/>
            <person name="Link A.J."/>
        </authorList>
    </citation>
    <scope>IDENTIFICATION BY MASS SPECTROMETRY</scope>
    <scope>SUBUNIT</scope>
</reference>
<feature type="chain" id="PRO_0000244640" description="Translation machinery-associated protein 64">
    <location>
        <begin position="1"/>
        <end position="565"/>
    </location>
</feature>
<feature type="domain" description="PUA" evidence="1">
    <location>
        <begin position="89"/>
        <end position="170"/>
    </location>
</feature>
<feature type="domain" description="SWIB/MDM2" evidence="3">
    <location>
        <begin position="362"/>
        <end position="447"/>
    </location>
</feature>
<feature type="domain" description="SUI1" evidence="2">
    <location>
        <begin position="475"/>
        <end position="547"/>
    </location>
</feature>
<name>TMA64_YEAST</name>
<organism>
    <name type="scientific">Saccharomyces cerevisiae (strain ATCC 204508 / S288c)</name>
    <name type="common">Baker's yeast</name>
    <dbReference type="NCBI Taxonomy" id="559292"/>
    <lineage>
        <taxon>Eukaryota</taxon>
        <taxon>Fungi</taxon>
        <taxon>Dikarya</taxon>
        <taxon>Ascomycota</taxon>
        <taxon>Saccharomycotina</taxon>
        <taxon>Saccharomycetes</taxon>
        <taxon>Saccharomycetales</taxon>
        <taxon>Saccharomycetaceae</taxon>
        <taxon>Saccharomyces</taxon>
    </lineage>
</organism>
<evidence type="ECO:0000255" key="1">
    <source>
        <dbReference type="PROSITE-ProRule" id="PRU00161"/>
    </source>
</evidence>
<evidence type="ECO:0000255" key="2">
    <source>
        <dbReference type="PROSITE-ProRule" id="PRU00200"/>
    </source>
</evidence>
<evidence type="ECO:0000255" key="3">
    <source>
        <dbReference type="PROSITE-ProRule" id="PRU01273"/>
    </source>
</evidence>
<evidence type="ECO:0000269" key="4">
    <source>
    </source>
</evidence>
<evidence type="ECO:0000269" key="5">
    <source>
    </source>
</evidence>
<evidence type="ECO:0000269" key="6">
    <source>
    </source>
</evidence>
<evidence type="ECO:0000305" key="7"/>
<gene>
    <name type="primary">TMA64</name>
    <name type="ordered locus">YDR117C</name>
</gene>
<sequence length="565" mass="63992">MFKKEPHIKALSNLKNSERKKLLQTFQKQTNNEEYSFRTSTIKQTNFNGQKSVGTVYTDENNTPILFKEKHKEQLFPTVYSCWEYPALLPIVLTHGFVIEEHLFNGANLMISGSIPPFDPRCKIGTLCGIASKQAPETVLAIGIVELDLPSFDKVIGETGVAVKIIHHFNDGLSKVFKMKLEPPFVLSTQSKDNNISSKQIESSEQIKAVEKEQEDVKEASVDVEEIAEVLDHFTVSDVDYFITRALYYTLTQDKGLELPISASNFISNHIMRNLPPIDHNEVNVKKTSWKKSAKFLKHFEKEGFLKLKGKGDDLTIVGKNTDKDELKNFVPYKLGCSKSATESRESTTSKEKTSGMMYSLTLYKPFNLAKDLLKEVNLASHTYYTSQDIRSAVSQYISVKNLADTKDKGKVIMDDLLFDMVNKKKKVLNASRIIARGEILHPLLTNNFTEFYQIFKSDDTLLFKAPMKGSLPHIKIITEMKIGRKVITRVSNFEVFQVDPESLAADLRKICSGSTTISESQTFKCAEVQVQGPHGQSIIDHLNKLGIPSKWIDFENKLKKKKRK</sequence>
<protein>
    <recommendedName>
        <fullName>Translation machinery-associated protein 64</fullName>
    </recommendedName>
</protein>
<proteinExistence type="evidence at protein level"/>
<dbReference type="EMBL" id="Z48758">
    <property type="protein sequence ID" value="CAA88670.1"/>
    <property type="molecule type" value="Genomic_DNA"/>
</dbReference>
<dbReference type="EMBL" id="BK006938">
    <property type="protein sequence ID" value="DAA11962.1"/>
    <property type="molecule type" value="Genomic_DNA"/>
</dbReference>
<dbReference type="PIR" id="S52682">
    <property type="entry name" value="S52682"/>
</dbReference>
<dbReference type="RefSeq" id="NP_010402.3">
    <property type="nucleotide sequence ID" value="NM_001180425.3"/>
</dbReference>
<dbReference type="SMR" id="Q04600"/>
<dbReference type="BioGRID" id="32173">
    <property type="interactions" value="296"/>
</dbReference>
<dbReference type="FunCoup" id="Q04600">
    <property type="interactions" value="549"/>
</dbReference>
<dbReference type="IntAct" id="Q04600">
    <property type="interactions" value="45"/>
</dbReference>
<dbReference type="MINT" id="Q04600"/>
<dbReference type="STRING" id="4932.YDR117C"/>
<dbReference type="iPTMnet" id="Q04600"/>
<dbReference type="PaxDb" id="4932-YDR117C"/>
<dbReference type="PeptideAtlas" id="Q04600"/>
<dbReference type="EnsemblFungi" id="YDR117C_mRNA">
    <property type="protein sequence ID" value="YDR117C"/>
    <property type="gene ID" value="YDR117C"/>
</dbReference>
<dbReference type="GeneID" id="851695"/>
<dbReference type="KEGG" id="sce:YDR117C"/>
<dbReference type="AGR" id="SGD:S000002524"/>
<dbReference type="SGD" id="S000002524">
    <property type="gene designation" value="TMA64"/>
</dbReference>
<dbReference type="VEuPathDB" id="FungiDB:YDR117C"/>
<dbReference type="eggNOG" id="KOG2522">
    <property type="taxonomic scope" value="Eukaryota"/>
</dbReference>
<dbReference type="GeneTree" id="ENSGT00550000074865"/>
<dbReference type="HOGENOM" id="CLU_012487_1_0_1"/>
<dbReference type="InParanoid" id="Q04600"/>
<dbReference type="OMA" id="MFLKPYR"/>
<dbReference type="OrthoDB" id="199771at2759"/>
<dbReference type="BioCyc" id="YEAST:G3O-29717-MONOMER"/>
<dbReference type="BioGRID-ORCS" id="851695">
    <property type="hits" value="0 hits in 10 CRISPR screens"/>
</dbReference>
<dbReference type="PRO" id="PR:Q04600"/>
<dbReference type="Proteomes" id="UP000002311">
    <property type="component" value="Chromosome IV"/>
</dbReference>
<dbReference type="RNAct" id="Q04600">
    <property type="molecule type" value="protein"/>
</dbReference>
<dbReference type="GO" id="GO:0003723">
    <property type="term" value="F:RNA binding"/>
    <property type="evidence" value="ECO:0000314"/>
    <property type="project" value="SGD"/>
</dbReference>
<dbReference type="GO" id="GO:0003743">
    <property type="term" value="F:translation initiation factor activity"/>
    <property type="evidence" value="ECO:0000318"/>
    <property type="project" value="GO_Central"/>
</dbReference>
<dbReference type="GO" id="GO:0001731">
    <property type="term" value="P:formation of translation preinitiation complex"/>
    <property type="evidence" value="ECO:0000318"/>
    <property type="project" value="GO_Central"/>
</dbReference>
<dbReference type="GO" id="GO:0006364">
    <property type="term" value="P:rRNA processing"/>
    <property type="evidence" value="ECO:0000353"/>
    <property type="project" value="SGD"/>
</dbReference>
<dbReference type="CDD" id="cd11608">
    <property type="entry name" value="eIF2D_C"/>
    <property type="match status" value="1"/>
</dbReference>
<dbReference type="CDD" id="cd21156">
    <property type="entry name" value="PUA_eIF2d-like"/>
    <property type="match status" value="1"/>
</dbReference>
<dbReference type="FunFam" id="3.30.780.10:FF:000008">
    <property type="entry name" value="eukaryotic translation initiation factor 2D"/>
    <property type="match status" value="1"/>
</dbReference>
<dbReference type="FunFam" id="3.10.400.20:FF:000010">
    <property type="entry name" value="Tma64p"/>
    <property type="match status" value="1"/>
</dbReference>
<dbReference type="Gene3D" id="3.10.400.20">
    <property type="match status" value="1"/>
</dbReference>
<dbReference type="Gene3D" id="3.30.780.10">
    <property type="entry name" value="SUI1-like domain"/>
    <property type="match status" value="1"/>
</dbReference>
<dbReference type="Gene3D" id="1.10.245.10">
    <property type="entry name" value="SWIB/MDM2 domain"/>
    <property type="match status" value="1"/>
</dbReference>
<dbReference type="InterPro" id="IPR039757">
    <property type="entry name" value="EIF2D"/>
</dbReference>
<dbReference type="InterPro" id="IPR039759">
    <property type="entry name" value="eIF2D_SUI1"/>
</dbReference>
<dbReference type="InterPro" id="IPR041366">
    <property type="entry name" value="Pre-PUA"/>
</dbReference>
<dbReference type="InterPro" id="IPR015947">
    <property type="entry name" value="PUA-like_sf"/>
</dbReference>
<dbReference type="InterPro" id="IPR048248">
    <property type="entry name" value="PUA_eIF2d-like"/>
</dbReference>
<dbReference type="InterPro" id="IPR001950">
    <property type="entry name" value="SUI1"/>
</dbReference>
<dbReference type="InterPro" id="IPR036877">
    <property type="entry name" value="SUI1_dom_sf"/>
</dbReference>
<dbReference type="InterPro" id="IPR036885">
    <property type="entry name" value="SWIB_MDM2_dom_sf"/>
</dbReference>
<dbReference type="InterPro" id="IPR003121">
    <property type="entry name" value="SWIB_MDM2_domain"/>
</dbReference>
<dbReference type="PANTHER" id="PTHR12217">
    <property type="entry name" value="EUKARYOTIC TRANSLATION INITIATION FACTOR 2D"/>
    <property type="match status" value="1"/>
</dbReference>
<dbReference type="PANTHER" id="PTHR12217:SF4">
    <property type="entry name" value="EUKARYOTIC TRANSLATION INITIATION FACTOR 2D"/>
    <property type="match status" value="1"/>
</dbReference>
<dbReference type="Pfam" id="PF17832">
    <property type="entry name" value="Pre-PUA"/>
    <property type="match status" value="1"/>
</dbReference>
<dbReference type="Pfam" id="PF01253">
    <property type="entry name" value="SUI1"/>
    <property type="match status" value="1"/>
</dbReference>
<dbReference type="Pfam" id="PF25304">
    <property type="entry name" value="WH_eIF2D"/>
    <property type="match status" value="1"/>
</dbReference>
<dbReference type="SUPFAM" id="SSF55159">
    <property type="entry name" value="eIF1-like"/>
    <property type="match status" value="1"/>
</dbReference>
<dbReference type="SUPFAM" id="SSF88697">
    <property type="entry name" value="PUA domain-like"/>
    <property type="match status" value="1"/>
</dbReference>
<dbReference type="SUPFAM" id="SSF47592">
    <property type="entry name" value="SWIB/MDM2 domain"/>
    <property type="match status" value="1"/>
</dbReference>
<dbReference type="PROSITE" id="PS50890">
    <property type="entry name" value="PUA"/>
    <property type="match status" value="1"/>
</dbReference>
<dbReference type="PROSITE" id="PS50296">
    <property type="entry name" value="SUI1"/>
    <property type="match status" value="1"/>
</dbReference>
<dbReference type="PROSITE" id="PS51925">
    <property type="entry name" value="SWIB_MDM2"/>
    <property type="match status" value="1"/>
</dbReference>
<keyword id="KW-1185">Reference proteome</keyword>